<evidence type="ECO:0000255" key="1">
    <source>
        <dbReference type="HAMAP-Rule" id="MF_00065"/>
    </source>
</evidence>
<feature type="chain" id="PRO_1000202408" description="Adenylyl-sulfate kinase">
    <location>
        <begin position="1"/>
        <end position="204"/>
    </location>
</feature>
<feature type="active site" description="Phosphoserine intermediate" evidence="1">
    <location>
        <position position="108"/>
    </location>
</feature>
<feature type="binding site" evidence="1">
    <location>
        <begin position="34"/>
        <end position="41"/>
    </location>
    <ligand>
        <name>ATP</name>
        <dbReference type="ChEBI" id="CHEBI:30616"/>
    </ligand>
</feature>
<protein>
    <recommendedName>
        <fullName evidence="1">Adenylyl-sulfate kinase</fullName>
        <ecNumber evidence="1">2.7.1.25</ecNumber>
    </recommendedName>
    <alternativeName>
        <fullName evidence="1">APS kinase</fullName>
    </alternativeName>
    <alternativeName>
        <fullName evidence="1">ATP adenosine-5'-phosphosulfate 3'-phosphotransferase</fullName>
    </alternativeName>
    <alternativeName>
        <fullName evidence="1">Adenosine-5'-phosphosulfate kinase</fullName>
    </alternativeName>
</protein>
<dbReference type="EC" id="2.7.1.25" evidence="1"/>
<dbReference type="EMBL" id="CP000139">
    <property type="protein sequence ID" value="ABR38133.1"/>
    <property type="molecule type" value="Genomic_DNA"/>
</dbReference>
<dbReference type="RefSeq" id="WP_005840188.1">
    <property type="nucleotide sequence ID" value="NZ_JANSWM010000030.1"/>
</dbReference>
<dbReference type="SMR" id="A6KXG9"/>
<dbReference type="STRING" id="435590.BVU_0418"/>
<dbReference type="PaxDb" id="435590-BVU_0418"/>
<dbReference type="GeneID" id="5301387"/>
<dbReference type="KEGG" id="bvu:BVU_0418"/>
<dbReference type="eggNOG" id="COG0529">
    <property type="taxonomic scope" value="Bacteria"/>
</dbReference>
<dbReference type="HOGENOM" id="CLU_046932_1_0_10"/>
<dbReference type="BioCyc" id="BVUL435590:G1G59-438-MONOMER"/>
<dbReference type="UniPathway" id="UPA00140">
    <property type="reaction ID" value="UER00205"/>
</dbReference>
<dbReference type="Proteomes" id="UP000002861">
    <property type="component" value="Chromosome"/>
</dbReference>
<dbReference type="GO" id="GO:0004020">
    <property type="term" value="F:adenylylsulfate kinase activity"/>
    <property type="evidence" value="ECO:0007669"/>
    <property type="project" value="UniProtKB-UniRule"/>
</dbReference>
<dbReference type="GO" id="GO:0005524">
    <property type="term" value="F:ATP binding"/>
    <property type="evidence" value="ECO:0007669"/>
    <property type="project" value="UniProtKB-UniRule"/>
</dbReference>
<dbReference type="GO" id="GO:0070814">
    <property type="term" value="P:hydrogen sulfide biosynthetic process"/>
    <property type="evidence" value="ECO:0007669"/>
    <property type="project" value="UniProtKB-UniRule"/>
</dbReference>
<dbReference type="GO" id="GO:0000103">
    <property type="term" value="P:sulfate assimilation"/>
    <property type="evidence" value="ECO:0007669"/>
    <property type="project" value="UniProtKB-UniRule"/>
</dbReference>
<dbReference type="CDD" id="cd02027">
    <property type="entry name" value="APSK"/>
    <property type="match status" value="1"/>
</dbReference>
<dbReference type="FunFam" id="3.40.50.300:FF:001219">
    <property type="entry name" value="Adenylyl-sulfate kinase"/>
    <property type="match status" value="1"/>
</dbReference>
<dbReference type="Gene3D" id="3.40.50.300">
    <property type="entry name" value="P-loop containing nucleotide triphosphate hydrolases"/>
    <property type="match status" value="1"/>
</dbReference>
<dbReference type="HAMAP" id="MF_00065">
    <property type="entry name" value="Adenylyl_sulf_kinase"/>
    <property type="match status" value="1"/>
</dbReference>
<dbReference type="InterPro" id="IPR002891">
    <property type="entry name" value="APS_kinase"/>
</dbReference>
<dbReference type="InterPro" id="IPR027417">
    <property type="entry name" value="P-loop_NTPase"/>
</dbReference>
<dbReference type="NCBIfam" id="TIGR00455">
    <property type="entry name" value="apsK"/>
    <property type="match status" value="1"/>
</dbReference>
<dbReference type="NCBIfam" id="NF003013">
    <property type="entry name" value="PRK03846.1"/>
    <property type="match status" value="1"/>
</dbReference>
<dbReference type="PANTHER" id="PTHR11055">
    <property type="entry name" value="BIFUNCTIONAL 3'-PHOSPHOADENOSINE 5'-PHOSPHOSULFATE SYNTHASE"/>
    <property type="match status" value="1"/>
</dbReference>
<dbReference type="PANTHER" id="PTHR11055:SF1">
    <property type="entry name" value="PAPS SYNTHETASE, ISOFORM D"/>
    <property type="match status" value="1"/>
</dbReference>
<dbReference type="Pfam" id="PF01583">
    <property type="entry name" value="APS_kinase"/>
    <property type="match status" value="1"/>
</dbReference>
<dbReference type="SUPFAM" id="SSF52540">
    <property type="entry name" value="P-loop containing nucleoside triphosphate hydrolases"/>
    <property type="match status" value="1"/>
</dbReference>
<sequence>MEEENIYPIFDRMLSRKDKEELLGQRGVMLWLTGLSGSGKSTIAIALERELHKRGLLCRILDGDNIRSGINNNLGFSAEDRVENIRRIAEIGKLFVDTGIITIAAFISPGNELRQMAARIIGIEDFLEIYVSTPLVECEKRDVKGLYAKARRGEIKNFTGISAPFEAPEHPALSLDTSKLSLEESVNTLLELVLPIVGKKGEKI</sequence>
<organism>
    <name type="scientific">Phocaeicola vulgatus (strain ATCC 8482 / DSM 1447 / JCM 5826 / CCUG 4940 / NBRC 14291 / NCTC 11154)</name>
    <name type="common">Bacteroides vulgatus</name>
    <dbReference type="NCBI Taxonomy" id="435590"/>
    <lineage>
        <taxon>Bacteria</taxon>
        <taxon>Pseudomonadati</taxon>
        <taxon>Bacteroidota</taxon>
        <taxon>Bacteroidia</taxon>
        <taxon>Bacteroidales</taxon>
        <taxon>Bacteroidaceae</taxon>
        <taxon>Phocaeicola</taxon>
    </lineage>
</organism>
<reference key="1">
    <citation type="journal article" date="2007" name="PLoS Biol.">
        <title>Evolution of symbiotic bacteria in the distal human intestine.</title>
        <authorList>
            <person name="Xu J."/>
            <person name="Mahowald M.A."/>
            <person name="Ley R.E."/>
            <person name="Lozupone C.A."/>
            <person name="Hamady M."/>
            <person name="Martens E.C."/>
            <person name="Henrissat B."/>
            <person name="Coutinho P.M."/>
            <person name="Minx P."/>
            <person name="Latreille P."/>
            <person name="Cordum H."/>
            <person name="Van Brunt A."/>
            <person name="Kim K."/>
            <person name="Fulton R.S."/>
            <person name="Fulton L.A."/>
            <person name="Clifton S.W."/>
            <person name="Wilson R.K."/>
            <person name="Knight R.D."/>
            <person name="Gordon J.I."/>
        </authorList>
    </citation>
    <scope>NUCLEOTIDE SEQUENCE [LARGE SCALE GENOMIC DNA]</scope>
    <source>
        <strain>ATCC 8482 / DSM 1447 / JCM 5826 / CCUG 4940 / NBRC 14291 / NCTC 11154</strain>
    </source>
</reference>
<gene>
    <name evidence="1" type="primary">cysC</name>
    <name type="ordered locus">BVU_0418</name>
</gene>
<name>CYSC_PHOV8</name>
<keyword id="KW-0067">ATP-binding</keyword>
<keyword id="KW-0418">Kinase</keyword>
<keyword id="KW-0547">Nucleotide-binding</keyword>
<keyword id="KW-0597">Phosphoprotein</keyword>
<keyword id="KW-0808">Transferase</keyword>
<comment type="function">
    <text evidence="1">Catalyzes the synthesis of activated sulfate.</text>
</comment>
<comment type="catalytic activity">
    <reaction evidence="1">
        <text>adenosine 5'-phosphosulfate + ATP = 3'-phosphoadenylyl sulfate + ADP + H(+)</text>
        <dbReference type="Rhea" id="RHEA:24152"/>
        <dbReference type="ChEBI" id="CHEBI:15378"/>
        <dbReference type="ChEBI" id="CHEBI:30616"/>
        <dbReference type="ChEBI" id="CHEBI:58243"/>
        <dbReference type="ChEBI" id="CHEBI:58339"/>
        <dbReference type="ChEBI" id="CHEBI:456216"/>
        <dbReference type="EC" id="2.7.1.25"/>
    </reaction>
</comment>
<comment type="pathway">
    <text evidence="1">Sulfur metabolism; hydrogen sulfide biosynthesis; sulfite from sulfate: step 2/3.</text>
</comment>
<comment type="similarity">
    <text evidence="1">Belongs to the APS kinase family.</text>
</comment>
<accession>A6KXG9</accession>
<proteinExistence type="inferred from homology"/>